<organism>
    <name type="scientific">Streptococcus pyogenes serotype M6 (strain ATCC BAA-946 / MGAS10394)</name>
    <dbReference type="NCBI Taxonomy" id="286636"/>
    <lineage>
        <taxon>Bacteria</taxon>
        <taxon>Bacillati</taxon>
        <taxon>Bacillota</taxon>
        <taxon>Bacilli</taxon>
        <taxon>Lactobacillales</taxon>
        <taxon>Streptococcaceae</taxon>
        <taxon>Streptococcus</taxon>
    </lineage>
</organism>
<gene>
    <name evidence="1" type="primary">pfkA</name>
    <name type="ordered locus">M6_Spy0976</name>
</gene>
<feature type="chain" id="PRO_0000111994" description="ATP-dependent 6-phosphofructokinase">
    <location>
        <begin position="1"/>
        <end position="337"/>
    </location>
</feature>
<feature type="active site" description="Proton acceptor" evidence="1">
    <location>
        <position position="127"/>
    </location>
</feature>
<feature type="binding site" evidence="1">
    <location>
        <position position="11"/>
    </location>
    <ligand>
        <name>ATP</name>
        <dbReference type="ChEBI" id="CHEBI:30616"/>
    </ligand>
</feature>
<feature type="binding site" evidence="1">
    <location>
        <begin position="21"/>
        <end position="25"/>
    </location>
    <ligand>
        <name>ADP</name>
        <dbReference type="ChEBI" id="CHEBI:456216"/>
        <note>allosteric activator; ligand shared between dimeric partners</note>
    </ligand>
</feature>
<feature type="binding site" evidence="1">
    <location>
        <begin position="72"/>
        <end position="73"/>
    </location>
    <ligand>
        <name>ATP</name>
        <dbReference type="ChEBI" id="CHEBI:30616"/>
    </ligand>
</feature>
<feature type="binding site" evidence="1">
    <location>
        <begin position="102"/>
        <end position="105"/>
    </location>
    <ligand>
        <name>ATP</name>
        <dbReference type="ChEBI" id="CHEBI:30616"/>
    </ligand>
</feature>
<feature type="binding site" evidence="1">
    <location>
        <position position="103"/>
    </location>
    <ligand>
        <name>Mg(2+)</name>
        <dbReference type="ChEBI" id="CHEBI:18420"/>
        <note>catalytic</note>
    </ligand>
</feature>
<feature type="binding site" description="in other chain" evidence="1">
    <location>
        <begin position="125"/>
        <end position="127"/>
    </location>
    <ligand>
        <name>substrate</name>
        <note>ligand shared between dimeric partners</note>
    </ligand>
</feature>
<feature type="binding site" description="in other chain" evidence="1">
    <location>
        <position position="154"/>
    </location>
    <ligand>
        <name>ADP</name>
        <dbReference type="ChEBI" id="CHEBI:456216"/>
        <note>allosteric activator; ligand shared between dimeric partners</note>
    </ligand>
</feature>
<feature type="binding site" evidence="1">
    <location>
        <position position="162"/>
    </location>
    <ligand>
        <name>substrate</name>
        <note>ligand shared between dimeric partners</note>
    </ligand>
</feature>
<feature type="binding site" description="in other chain" evidence="1">
    <location>
        <begin position="169"/>
        <end position="171"/>
    </location>
    <ligand>
        <name>substrate</name>
        <note>ligand shared between dimeric partners</note>
    </ligand>
</feature>
<feature type="binding site" description="in other chain" evidence="1">
    <location>
        <begin position="185"/>
        <end position="187"/>
    </location>
    <ligand>
        <name>ADP</name>
        <dbReference type="ChEBI" id="CHEBI:456216"/>
        <note>allosteric activator; ligand shared between dimeric partners</note>
    </ligand>
</feature>
<feature type="binding site" description="in other chain" evidence="1">
    <location>
        <position position="212"/>
    </location>
    <ligand>
        <name>ADP</name>
        <dbReference type="ChEBI" id="CHEBI:456216"/>
        <note>allosteric activator; ligand shared between dimeric partners</note>
    </ligand>
</feature>
<feature type="binding site" description="in other chain" evidence="1">
    <location>
        <begin position="214"/>
        <end position="216"/>
    </location>
    <ligand>
        <name>ADP</name>
        <dbReference type="ChEBI" id="CHEBI:456216"/>
        <note>allosteric activator; ligand shared between dimeric partners</note>
    </ligand>
</feature>
<feature type="binding site" description="in other chain" evidence="1">
    <location>
        <position position="223"/>
    </location>
    <ligand>
        <name>substrate</name>
        <note>ligand shared between dimeric partners</note>
    </ligand>
</feature>
<feature type="binding site" evidence="1">
    <location>
        <position position="245"/>
    </location>
    <ligand>
        <name>substrate</name>
        <note>ligand shared between dimeric partners</note>
    </ligand>
</feature>
<feature type="binding site" description="in other chain" evidence="1">
    <location>
        <begin position="251"/>
        <end position="254"/>
    </location>
    <ligand>
        <name>substrate</name>
        <note>ligand shared between dimeric partners</note>
    </ligand>
</feature>
<proteinExistence type="inferred from homology"/>
<reference key="1">
    <citation type="journal article" date="2004" name="J. Infect. Dis.">
        <title>Progress toward characterization of the group A Streptococcus metagenome: complete genome sequence of a macrolide-resistant serotype M6 strain.</title>
        <authorList>
            <person name="Banks D.J."/>
            <person name="Porcella S.F."/>
            <person name="Barbian K.D."/>
            <person name="Beres S.B."/>
            <person name="Philips L.E."/>
            <person name="Voyich J.M."/>
            <person name="DeLeo F.R."/>
            <person name="Martin J.M."/>
            <person name="Somerville G.A."/>
            <person name="Musser J.M."/>
        </authorList>
    </citation>
    <scope>NUCLEOTIDE SEQUENCE [LARGE SCALE GENOMIC DNA]</scope>
    <source>
        <strain>ATCC BAA-946 / MGAS10394</strain>
    </source>
</reference>
<comment type="function">
    <text evidence="1">Catalyzes the phosphorylation of D-fructose 6-phosphate to fructose 1,6-bisphosphate by ATP, the first committing step of glycolysis.</text>
</comment>
<comment type="catalytic activity">
    <reaction evidence="1">
        <text>beta-D-fructose 6-phosphate + ATP = beta-D-fructose 1,6-bisphosphate + ADP + H(+)</text>
        <dbReference type="Rhea" id="RHEA:16109"/>
        <dbReference type="ChEBI" id="CHEBI:15378"/>
        <dbReference type="ChEBI" id="CHEBI:30616"/>
        <dbReference type="ChEBI" id="CHEBI:32966"/>
        <dbReference type="ChEBI" id="CHEBI:57634"/>
        <dbReference type="ChEBI" id="CHEBI:456216"/>
        <dbReference type="EC" id="2.7.1.11"/>
    </reaction>
</comment>
<comment type="cofactor">
    <cofactor evidence="1">
        <name>Mg(2+)</name>
        <dbReference type="ChEBI" id="CHEBI:18420"/>
    </cofactor>
</comment>
<comment type="activity regulation">
    <text evidence="1">Allosterically activated by ADP and other diphosphonucleosides, and allosterically inhibited by phosphoenolpyruvate.</text>
</comment>
<comment type="pathway">
    <text evidence="1">Carbohydrate degradation; glycolysis; D-glyceraldehyde 3-phosphate and glycerone phosphate from D-glucose: step 3/4.</text>
</comment>
<comment type="subunit">
    <text evidence="1">Homotetramer.</text>
</comment>
<comment type="subcellular location">
    <subcellularLocation>
        <location evidence="1">Cytoplasm</location>
    </subcellularLocation>
</comment>
<comment type="similarity">
    <text evidence="1">Belongs to the phosphofructokinase type A (PFKA) family. ATP-dependent PFK group I subfamily. Prokaryotic clade 'B1' sub-subfamily.</text>
</comment>
<name>PFKA_STRP6</name>
<protein>
    <recommendedName>
        <fullName evidence="1">ATP-dependent 6-phosphofructokinase</fullName>
        <shortName evidence="1">ATP-PFK</shortName>
        <shortName evidence="1">Phosphofructokinase</shortName>
        <ecNumber evidence="1">2.7.1.11</ecNumber>
    </recommendedName>
    <alternativeName>
        <fullName evidence="1">Phosphohexokinase</fullName>
    </alternativeName>
</protein>
<evidence type="ECO:0000255" key="1">
    <source>
        <dbReference type="HAMAP-Rule" id="MF_00339"/>
    </source>
</evidence>
<accession>Q5XBV2</accession>
<keyword id="KW-0021">Allosteric enzyme</keyword>
<keyword id="KW-0067">ATP-binding</keyword>
<keyword id="KW-0963">Cytoplasm</keyword>
<keyword id="KW-0324">Glycolysis</keyword>
<keyword id="KW-0418">Kinase</keyword>
<keyword id="KW-0460">Magnesium</keyword>
<keyword id="KW-0479">Metal-binding</keyword>
<keyword id="KW-0547">Nucleotide-binding</keyword>
<keyword id="KW-0808">Transferase</keyword>
<dbReference type="EC" id="2.7.1.11" evidence="1"/>
<dbReference type="EMBL" id="CP000003">
    <property type="protein sequence ID" value="AAT87111.1"/>
    <property type="molecule type" value="Genomic_DNA"/>
</dbReference>
<dbReference type="RefSeq" id="WP_002984444.1">
    <property type="nucleotide sequence ID" value="NC_006086.1"/>
</dbReference>
<dbReference type="SMR" id="Q5XBV2"/>
<dbReference type="GeneID" id="69900759"/>
<dbReference type="KEGG" id="spa:M6_Spy0976"/>
<dbReference type="HOGENOM" id="CLU_020655_0_1_9"/>
<dbReference type="UniPathway" id="UPA00109">
    <property type="reaction ID" value="UER00182"/>
</dbReference>
<dbReference type="Proteomes" id="UP000001167">
    <property type="component" value="Chromosome"/>
</dbReference>
<dbReference type="GO" id="GO:0005945">
    <property type="term" value="C:6-phosphofructokinase complex"/>
    <property type="evidence" value="ECO:0007669"/>
    <property type="project" value="TreeGrafter"/>
</dbReference>
<dbReference type="GO" id="GO:0003872">
    <property type="term" value="F:6-phosphofructokinase activity"/>
    <property type="evidence" value="ECO:0007669"/>
    <property type="project" value="UniProtKB-UniRule"/>
</dbReference>
<dbReference type="GO" id="GO:0016208">
    <property type="term" value="F:AMP binding"/>
    <property type="evidence" value="ECO:0007669"/>
    <property type="project" value="TreeGrafter"/>
</dbReference>
<dbReference type="GO" id="GO:0005524">
    <property type="term" value="F:ATP binding"/>
    <property type="evidence" value="ECO:0007669"/>
    <property type="project" value="UniProtKB-KW"/>
</dbReference>
<dbReference type="GO" id="GO:0070095">
    <property type="term" value="F:fructose-6-phosphate binding"/>
    <property type="evidence" value="ECO:0007669"/>
    <property type="project" value="TreeGrafter"/>
</dbReference>
<dbReference type="GO" id="GO:0042802">
    <property type="term" value="F:identical protein binding"/>
    <property type="evidence" value="ECO:0007669"/>
    <property type="project" value="TreeGrafter"/>
</dbReference>
<dbReference type="GO" id="GO:0046872">
    <property type="term" value="F:metal ion binding"/>
    <property type="evidence" value="ECO:0007669"/>
    <property type="project" value="UniProtKB-KW"/>
</dbReference>
<dbReference type="GO" id="GO:0048029">
    <property type="term" value="F:monosaccharide binding"/>
    <property type="evidence" value="ECO:0007669"/>
    <property type="project" value="TreeGrafter"/>
</dbReference>
<dbReference type="GO" id="GO:0061621">
    <property type="term" value="P:canonical glycolysis"/>
    <property type="evidence" value="ECO:0007669"/>
    <property type="project" value="TreeGrafter"/>
</dbReference>
<dbReference type="GO" id="GO:0030388">
    <property type="term" value="P:fructose 1,6-bisphosphate metabolic process"/>
    <property type="evidence" value="ECO:0007669"/>
    <property type="project" value="TreeGrafter"/>
</dbReference>
<dbReference type="GO" id="GO:0006002">
    <property type="term" value="P:fructose 6-phosphate metabolic process"/>
    <property type="evidence" value="ECO:0007669"/>
    <property type="project" value="InterPro"/>
</dbReference>
<dbReference type="FunFam" id="3.40.50.450:FF:000001">
    <property type="entry name" value="ATP-dependent 6-phosphofructokinase"/>
    <property type="match status" value="1"/>
</dbReference>
<dbReference type="FunFam" id="3.40.50.460:FF:000002">
    <property type="entry name" value="ATP-dependent 6-phosphofructokinase"/>
    <property type="match status" value="1"/>
</dbReference>
<dbReference type="Gene3D" id="3.40.50.450">
    <property type="match status" value="1"/>
</dbReference>
<dbReference type="Gene3D" id="3.40.50.460">
    <property type="entry name" value="Phosphofructokinase domain"/>
    <property type="match status" value="1"/>
</dbReference>
<dbReference type="HAMAP" id="MF_00339">
    <property type="entry name" value="Phosphofructokinase_I_B1"/>
    <property type="match status" value="1"/>
</dbReference>
<dbReference type="InterPro" id="IPR022953">
    <property type="entry name" value="ATP_PFK"/>
</dbReference>
<dbReference type="InterPro" id="IPR012003">
    <property type="entry name" value="ATP_PFK_prok-type"/>
</dbReference>
<dbReference type="InterPro" id="IPR012828">
    <property type="entry name" value="PFKA_ATP_prok"/>
</dbReference>
<dbReference type="InterPro" id="IPR015912">
    <property type="entry name" value="Phosphofructokinase_CS"/>
</dbReference>
<dbReference type="InterPro" id="IPR000023">
    <property type="entry name" value="Phosphofructokinase_dom"/>
</dbReference>
<dbReference type="InterPro" id="IPR035966">
    <property type="entry name" value="PKF_sf"/>
</dbReference>
<dbReference type="NCBIfam" id="TIGR02482">
    <property type="entry name" value="PFKA_ATP"/>
    <property type="match status" value="1"/>
</dbReference>
<dbReference type="NCBIfam" id="NF002872">
    <property type="entry name" value="PRK03202.1"/>
    <property type="match status" value="1"/>
</dbReference>
<dbReference type="PANTHER" id="PTHR13697:SF4">
    <property type="entry name" value="ATP-DEPENDENT 6-PHOSPHOFRUCTOKINASE"/>
    <property type="match status" value="1"/>
</dbReference>
<dbReference type="PANTHER" id="PTHR13697">
    <property type="entry name" value="PHOSPHOFRUCTOKINASE"/>
    <property type="match status" value="1"/>
</dbReference>
<dbReference type="Pfam" id="PF00365">
    <property type="entry name" value="PFK"/>
    <property type="match status" value="1"/>
</dbReference>
<dbReference type="PIRSF" id="PIRSF000532">
    <property type="entry name" value="ATP_PFK_prok"/>
    <property type="match status" value="1"/>
</dbReference>
<dbReference type="PRINTS" id="PR00476">
    <property type="entry name" value="PHFRCTKINASE"/>
</dbReference>
<dbReference type="SUPFAM" id="SSF53784">
    <property type="entry name" value="Phosphofructokinase"/>
    <property type="match status" value="1"/>
</dbReference>
<dbReference type="PROSITE" id="PS00433">
    <property type="entry name" value="PHOSPHOFRUCTOKINASE"/>
    <property type="match status" value="1"/>
</dbReference>
<sequence length="337" mass="35762">MKRIAVLTSGGDAPGMNAAIRAVVRKAISEGMEVYGINRGYAGMVDGDIFPLGSKEVGDKISRGGTFLYSARYPEFAQLEGQLAGIEQLKKHGIEGVVVIGGDGSYHGAMRLTEHGFPAVGIPGTIDNDIAGTDYTIGFDTAVNTAVEAIDKLRDTSSSHGRTFVVEVMGRNAGDIALWAGIASGADQIIVPEEEFDIEKVASTIQYDFEHKGKNHHIIVLAEGVMSGEAFAQKLKEAGDKSDLRVTNLGHILRGGSPTARDRVIASWMGSHAVELLKEGKGGLAVGIHNEELVESPILGTAEEGALFSLTEEGKIIVNNPHKARLDFAALNRSLSQ</sequence>